<accession>B8DAM3</accession>
<reference key="1">
    <citation type="journal article" date="2011" name="J. Bacteriol.">
        <title>Genome sequence of lineage III Listeria monocytogenes strain HCC23.</title>
        <authorList>
            <person name="Steele C.L."/>
            <person name="Donaldson J.R."/>
            <person name="Paul D."/>
            <person name="Banes M.M."/>
            <person name="Arick T."/>
            <person name="Bridges S.M."/>
            <person name="Lawrence M.L."/>
        </authorList>
    </citation>
    <scope>NUCLEOTIDE SEQUENCE [LARGE SCALE GENOMIC DNA]</scope>
    <source>
        <strain>HCC23</strain>
    </source>
</reference>
<sequence>MKMEKALNITSEIGKLQTVLVKRPGSELENITPEYLESLLFDDIPYLKMMQKEHDFFVKTMQGSNIEVLYLEKLAAEALRAANNKESFLTKIIKESNQMDESALYVRDYLMSFDEEEMISKLMSGLKKSEIPERKKKHLNEMMDEQYPFFLDPLPNLYFTRDPAAVIGNGVTINKMFQPARRRESMFIELILKHHPRFSNQEIPVWSGREEPFSLEGGDELVLTEETILVGVSERTDARAVERLAESLFSRSPKIKRVLAVEIPETRSFMHLDTVFTMVNYAQFTIHPAIQNQQGELNIYILEKSENGLDITPRRDFKRVIAEVLGEPEVDFIPCGGEDVIVSAREQWNDGANTLAIAPGEVITYDRNQVSNDLLRSAGIKVHEVISSELSRGRGGPRCMTMPLSRENLK</sequence>
<organism>
    <name type="scientific">Listeria monocytogenes serotype 4a (strain HCC23)</name>
    <dbReference type="NCBI Taxonomy" id="552536"/>
    <lineage>
        <taxon>Bacteria</taxon>
        <taxon>Bacillati</taxon>
        <taxon>Bacillota</taxon>
        <taxon>Bacilli</taxon>
        <taxon>Bacillales</taxon>
        <taxon>Listeriaceae</taxon>
        <taxon>Listeria</taxon>
    </lineage>
</organism>
<protein>
    <recommendedName>
        <fullName evidence="1">Arginine deiminase</fullName>
        <shortName evidence="1">ADI</shortName>
        <ecNumber evidence="1">3.5.3.6</ecNumber>
    </recommendedName>
    <alternativeName>
        <fullName evidence="1">Arginine dihydrolase</fullName>
        <shortName evidence="1">AD</shortName>
    </alternativeName>
</protein>
<evidence type="ECO:0000255" key="1">
    <source>
        <dbReference type="HAMAP-Rule" id="MF_00242"/>
    </source>
</evidence>
<keyword id="KW-0056">Arginine metabolism</keyword>
<keyword id="KW-0963">Cytoplasm</keyword>
<keyword id="KW-0378">Hydrolase</keyword>
<gene>
    <name evidence="1" type="primary">arcA</name>
    <name type="ordered locus">LMHCC_2627</name>
</gene>
<comment type="catalytic activity">
    <reaction evidence="1">
        <text>L-arginine + H2O = L-citrulline + NH4(+)</text>
        <dbReference type="Rhea" id="RHEA:19597"/>
        <dbReference type="ChEBI" id="CHEBI:15377"/>
        <dbReference type="ChEBI" id="CHEBI:28938"/>
        <dbReference type="ChEBI" id="CHEBI:32682"/>
        <dbReference type="ChEBI" id="CHEBI:57743"/>
        <dbReference type="EC" id="3.5.3.6"/>
    </reaction>
</comment>
<comment type="pathway">
    <text evidence="1">Amino-acid degradation; L-arginine degradation via ADI pathway; carbamoyl phosphate from L-arginine: step 1/2.</text>
</comment>
<comment type="subcellular location">
    <subcellularLocation>
        <location evidence="1">Cytoplasm</location>
    </subcellularLocation>
</comment>
<comment type="similarity">
    <text evidence="1">Belongs to the arginine deiminase family.</text>
</comment>
<dbReference type="EC" id="3.5.3.6" evidence="1"/>
<dbReference type="EMBL" id="CP001175">
    <property type="protein sequence ID" value="ACK40962.1"/>
    <property type="molecule type" value="Genomic_DNA"/>
</dbReference>
<dbReference type="SMR" id="B8DAM3"/>
<dbReference type="KEGG" id="lmh:LMHCC_2627"/>
<dbReference type="HOGENOM" id="CLU_052662_0_1_9"/>
<dbReference type="UniPathway" id="UPA00254">
    <property type="reaction ID" value="UER00364"/>
</dbReference>
<dbReference type="GO" id="GO:0005737">
    <property type="term" value="C:cytoplasm"/>
    <property type="evidence" value="ECO:0007669"/>
    <property type="project" value="UniProtKB-SubCell"/>
</dbReference>
<dbReference type="GO" id="GO:0016990">
    <property type="term" value="F:arginine deiminase activity"/>
    <property type="evidence" value="ECO:0007669"/>
    <property type="project" value="UniProtKB-UniRule"/>
</dbReference>
<dbReference type="GO" id="GO:0019547">
    <property type="term" value="P:arginine catabolic process to ornithine"/>
    <property type="evidence" value="ECO:0007669"/>
    <property type="project" value="UniProtKB-UniRule"/>
</dbReference>
<dbReference type="GO" id="GO:0019546">
    <property type="term" value="P:arginine deiminase pathway"/>
    <property type="evidence" value="ECO:0007669"/>
    <property type="project" value="TreeGrafter"/>
</dbReference>
<dbReference type="Gene3D" id="1.10.3930.10">
    <property type="entry name" value="Arginine deiminase"/>
    <property type="match status" value="1"/>
</dbReference>
<dbReference type="Gene3D" id="3.75.10.10">
    <property type="entry name" value="L-arginine/glycine Amidinotransferase, Chain A"/>
    <property type="match status" value="1"/>
</dbReference>
<dbReference type="HAMAP" id="MF_00242">
    <property type="entry name" value="Arg_deiminase"/>
    <property type="match status" value="1"/>
</dbReference>
<dbReference type="InterPro" id="IPR003876">
    <property type="entry name" value="Arg_deiminase"/>
</dbReference>
<dbReference type="NCBIfam" id="TIGR01078">
    <property type="entry name" value="arcA"/>
    <property type="match status" value="1"/>
</dbReference>
<dbReference type="NCBIfam" id="NF002381">
    <property type="entry name" value="PRK01388.1"/>
    <property type="match status" value="1"/>
</dbReference>
<dbReference type="PANTHER" id="PTHR47271">
    <property type="entry name" value="ARGININE DEIMINASE"/>
    <property type="match status" value="1"/>
</dbReference>
<dbReference type="PANTHER" id="PTHR47271:SF2">
    <property type="entry name" value="ARGININE DEIMINASE"/>
    <property type="match status" value="1"/>
</dbReference>
<dbReference type="Pfam" id="PF02274">
    <property type="entry name" value="ADI"/>
    <property type="match status" value="1"/>
</dbReference>
<dbReference type="PIRSF" id="PIRSF006356">
    <property type="entry name" value="Arg_deiminase"/>
    <property type="match status" value="1"/>
</dbReference>
<dbReference type="PRINTS" id="PR01466">
    <property type="entry name" value="ARGDEIMINASE"/>
</dbReference>
<dbReference type="SUPFAM" id="SSF55909">
    <property type="entry name" value="Pentein"/>
    <property type="match status" value="1"/>
</dbReference>
<proteinExistence type="inferred from homology"/>
<feature type="chain" id="PRO_1000125318" description="Arginine deiminase">
    <location>
        <begin position="1"/>
        <end position="410"/>
    </location>
</feature>
<feature type="active site" description="Amidino-cysteine intermediate" evidence="1">
    <location>
        <position position="399"/>
    </location>
</feature>
<name>ARCA_LISMH</name>